<name>HCFC1_MESAU</name>
<evidence type="ECO:0000250" key="1">
    <source>
        <dbReference type="UniProtKB" id="D3ZN95"/>
    </source>
</evidence>
<evidence type="ECO:0000250" key="2">
    <source>
        <dbReference type="UniProtKB" id="P51610"/>
    </source>
</evidence>
<evidence type="ECO:0000250" key="3">
    <source>
        <dbReference type="UniProtKB" id="Q61191"/>
    </source>
</evidence>
<evidence type="ECO:0000255" key="4"/>
<evidence type="ECO:0000255" key="5">
    <source>
        <dbReference type="PROSITE-ProRule" id="PRU00316"/>
    </source>
</evidence>
<evidence type="ECO:0000256" key="6">
    <source>
        <dbReference type="SAM" id="MobiDB-lite"/>
    </source>
</evidence>
<evidence type="ECO:0000269" key="7">
    <source>
    </source>
</evidence>
<evidence type="ECO:0000303" key="8">
    <source>
    </source>
</evidence>
<proteinExistence type="evidence at protein level"/>
<feature type="initiator methionine" description="Removed" evidence="2">
    <location>
        <position position="1"/>
    </location>
</feature>
<feature type="chain" id="PRO_0000016623" description="HCF N-terminal chain 6" evidence="2">
    <location>
        <begin position="2"/>
        <end position="1432"/>
    </location>
</feature>
<feature type="chain" id="PRO_0000016624" description="HCF N-terminal chain 5" evidence="2">
    <location>
        <begin position="2"/>
        <end position="1332"/>
    </location>
</feature>
<feature type="chain" id="PRO_0000016625" description="HCF N-terminal chain 4" evidence="2">
    <location>
        <begin position="2"/>
        <end position="1304"/>
    </location>
</feature>
<feature type="chain" id="PRO_0000016626" description="HCF N-terminal chain 3" evidence="2">
    <location>
        <begin position="2"/>
        <end position="1110"/>
    </location>
</feature>
<feature type="chain" id="PRO_0000016627" description="HCF N-terminal chain 2" evidence="2">
    <location>
        <begin position="2"/>
        <end position="1081"/>
    </location>
</feature>
<feature type="chain" id="PRO_0000016628" description="HCF N-terminal chain 1" evidence="2">
    <location>
        <begin position="2"/>
        <end position="1019"/>
    </location>
</feature>
<feature type="chain" id="PRO_0000016629" description="HCF C-terminal chain 1" evidence="2">
    <location>
        <begin position="1020"/>
        <end position="2090"/>
    </location>
</feature>
<feature type="chain" id="PRO_0000016630" description="HCF C-terminal chain 2" evidence="2">
    <location>
        <begin position="1082"/>
        <end position="2090"/>
    </location>
</feature>
<feature type="chain" id="PRO_0000016631" description="HCF C-terminal chain 3" evidence="2">
    <location>
        <begin position="1111"/>
        <end position="2090"/>
    </location>
</feature>
<feature type="chain" id="PRO_0000016632" description="HCF C-terminal chain 4" evidence="2">
    <location>
        <begin position="1305"/>
        <end position="2090"/>
    </location>
</feature>
<feature type="chain" id="PRO_0000016633" description="HCF C-terminal chain 5" evidence="2">
    <location>
        <begin position="1333"/>
        <end position="2090"/>
    </location>
</feature>
<feature type="chain" id="PRO_0000016634" description="HCF C-terminal chain 6" evidence="2">
    <location>
        <begin position="1433"/>
        <end position="2090"/>
    </location>
</feature>
<feature type="repeat" description="Kelch 1" evidence="4">
    <location>
        <begin position="44"/>
        <end position="89"/>
    </location>
</feature>
<feature type="repeat" description="Kelch 2" evidence="4">
    <location>
        <begin position="93"/>
        <end position="140"/>
    </location>
</feature>
<feature type="repeat" description="Kelch 3" evidence="4">
    <location>
        <begin position="148"/>
        <end position="194"/>
    </location>
</feature>
<feature type="repeat" description="Kelch 4" evidence="4">
    <location>
        <begin position="217"/>
        <end position="265"/>
    </location>
</feature>
<feature type="repeat" description="Kelch 5" evidence="4">
    <location>
        <begin position="266"/>
        <end position="313"/>
    </location>
</feature>
<feature type="domain" description="Fibronectin type-III 1" evidence="5">
    <location>
        <begin position="366"/>
        <end position="469"/>
    </location>
</feature>
<feature type="repeat" description="HCF repeat 1" evidence="2">
    <location>
        <begin position="1010"/>
        <end position="1035"/>
    </location>
</feature>
<feature type="repeat" description="HCF repeat 2" evidence="2">
    <location>
        <begin position="1072"/>
        <end position="1097"/>
    </location>
</feature>
<feature type="repeat" description="HCF repeat 3" evidence="2">
    <location>
        <begin position="1101"/>
        <end position="1126"/>
    </location>
</feature>
<feature type="repeat" description="HCF repeat 4; degenerate" evidence="2">
    <location>
        <begin position="1157"/>
        <end position="1182"/>
    </location>
</feature>
<feature type="repeat" description="HCF repeat 5" evidence="2">
    <location>
        <begin position="1295"/>
        <end position="1320"/>
    </location>
</feature>
<feature type="repeat" description="HCF repeat 6" evidence="2">
    <location>
        <begin position="1323"/>
        <end position="1348"/>
    </location>
</feature>
<feature type="repeat" description="HCF repeat 7; degenerate" evidence="2">
    <location>
        <begin position="1358"/>
        <end position="1383"/>
    </location>
</feature>
<feature type="repeat" description="HCF repeat 8" evidence="2">
    <location>
        <begin position="1423"/>
        <end position="1448"/>
    </location>
</feature>
<feature type="domain" description="Fibronectin type-III 2" evidence="5">
    <location>
        <begin position="1853"/>
        <end position="1943"/>
    </location>
</feature>
<feature type="domain" description="Fibronectin type-III 3" evidence="5">
    <location>
        <begin position="1945"/>
        <end position="2061"/>
    </location>
</feature>
<feature type="region of interest" description="Disordered" evidence="6">
    <location>
        <begin position="407"/>
        <end position="434"/>
    </location>
</feature>
<feature type="region of interest" description="Required for interaction with OGT" evidence="2">
    <location>
        <begin position="500"/>
        <end position="550"/>
    </location>
</feature>
<feature type="region of interest" description="Interaction with SIN3A" evidence="2">
    <location>
        <begin position="610"/>
        <end position="722"/>
    </location>
</feature>
<feature type="region of interest" description="Interaction with ZBTB17" evidence="2">
    <location>
        <begin position="750"/>
        <end position="902"/>
    </location>
</feature>
<feature type="region of interest" description="Interaction with GABP2" evidence="2">
    <location>
        <begin position="813"/>
        <end position="912"/>
    </location>
</feature>
<feature type="region of interest" description="Disordered" evidence="6">
    <location>
        <begin position="1098"/>
        <end position="1140"/>
    </location>
</feature>
<feature type="region of interest" description="Disordered" evidence="6">
    <location>
        <begin position="1302"/>
        <end position="1374"/>
    </location>
</feature>
<feature type="region of interest" description="Disordered" evidence="6">
    <location>
        <begin position="1444"/>
        <end position="1486"/>
    </location>
</feature>
<feature type="region of interest" description="Disordered" evidence="6">
    <location>
        <begin position="2049"/>
        <end position="2090"/>
    </location>
</feature>
<feature type="compositionally biased region" description="Pro residues" evidence="6">
    <location>
        <begin position="413"/>
        <end position="428"/>
    </location>
</feature>
<feature type="compositionally biased region" description="Low complexity" evidence="6">
    <location>
        <begin position="1114"/>
        <end position="1130"/>
    </location>
</feature>
<feature type="compositionally biased region" description="Low complexity" evidence="6">
    <location>
        <begin position="1308"/>
        <end position="1321"/>
    </location>
</feature>
<feature type="compositionally biased region" description="Polar residues" evidence="6">
    <location>
        <begin position="1465"/>
        <end position="1475"/>
    </location>
</feature>
<feature type="compositionally biased region" description="Low complexity" evidence="6">
    <location>
        <begin position="1476"/>
        <end position="1486"/>
    </location>
</feature>
<feature type="site" description="Cleavage; by autolysis" evidence="2">
    <location>
        <begin position="1019"/>
        <end position="1020"/>
    </location>
</feature>
<feature type="site" description="Cleavage; by autolysis" evidence="2">
    <location>
        <begin position="1081"/>
        <end position="1082"/>
    </location>
</feature>
<feature type="site" description="Cleavage; by autolysis" evidence="2">
    <location>
        <begin position="1110"/>
        <end position="1111"/>
    </location>
</feature>
<feature type="site" description="Cleavage; by autolysis" evidence="2">
    <location>
        <begin position="1304"/>
        <end position="1305"/>
    </location>
</feature>
<feature type="site" description="Cleavage; by autolysis" evidence="2">
    <location>
        <begin position="1332"/>
        <end position="1333"/>
    </location>
</feature>
<feature type="site" description="Cleavage; by autolysis" evidence="2">
    <location>
        <begin position="1432"/>
        <end position="1433"/>
    </location>
</feature>
<feature type="modified residue" description="N-acetylalanine" evidence="2">
    <location>
        <position position="2"/>
    </location>
</feature>
<feature type="modified residue" description="Phosphoserine" evidence="2">
    <location>
        <position position="6"/>
    </location>
</feature>
<feature type="modified residue" description="N6-acetyllysine" evidence="2">
    <location>
        <position position="288"/>
    </location>
</feature>
<feature type="modified residue" description="Phosphoserine" evidence="2">
    <location>
        <position position="411"/>
    </location>
</feature>
<feature type="modified residue" description="Omega-N-methylarginine" evidence="2">
    <location>
        <position position="504"/>
    </location>
</feature>
<feature type="modified residue" description="Omega-N-methylarginine" evidence="2">
    <location>
        <position position="524"/>
    </location>
</feature>
<feature type="modified residue" description="Phosphoserine" evidence="2">
    <location>
        <position position="598"/>
    </location>
</feature>
<feature type="modified residue" description="Phosphoserine" evidence="2">
    <location>
        <position position="666"/>
    </location>
</feature>
<feature type="modified residue" description="Phosphoserine" evidence="2">
    <location>
        <position position="669"/>
    </location>
</feature>
<feature type="modified residue" description="N6-acetyllysine" evidence="2">
    <location>
        <position position="813"/>
    </location>
</feature>
<feature type="modified residue" description="Phosphoserine" evidence="2">
    <location>
        <position position="1204"/>
    </location>
</feature>
<feature type="modified residue" description="Asymmetric dimethylarginine" evidence="3">
    <location>
        <position position="1216"/>
    </location>
</feature>
<feature type="modified residue" description="Phosphoserine" evidence="2">
    <location>
        <position position="1223"/>
    </location>
</feature>
<feature type="modified residue" description="Phosphothreonine" evidence="2">
    <location>
        <position position="1500"/>
    </location>
</feature>
<feature type="modified residue" description="Phosphoserine" evidence="2">
    <location>
        <position position="1506"/>
    </location>
</feature>
<feature type="modified residue" description="Phosphoserine" evidence="2">
    <location>
        <position position="1559"/>
    </location>
</feature>
<feature type="modified residue" description="Phosphoserine" evidence="2">
    <location>
        <position position="1826"/>
    </location>
</feature>
<feature type="modified residue" description="Phosphoserine" evidence="3">
    <location>
        <position position="1893"/>
    </location>
</feature>
<feature type="modified residue" description="N6-acetyllysine" evidence="2">
    <location>
        <position position="2060"/>
    </location>
</feature>
<feature type="cross-link" description="Glycyl lysine isopeptide (Lys-Gly) (interchain with G-Cter in ubiquitin)" evidence="2">
    <location>
        <position position="105"/>
    </location>
</feature>
<feature type="cross-link" description="Glycyl lysine isopeptide (Lys-Gly) (interchain with G-Cter in ubiquitin)" evidence="2">
    <location>
        <position position="163"/>
    </location>
</feature>
<feature type="cross-link" description="Glycyl lysine isopeptide (Lys-Gly) (interchain with G-Cter in ubiquitin)" evidence="2">
    <location>
        <position position="244"/>
    </location>
</feature>
<feature type="cross-link" description="Glycyl lysine isopeptide (Lys-Gly) (interchain with G-Cter in SUMO2)" evidence="2">
    <location>
        <position position="282"/>
    </location>
</feature>
<feature type="cross-link" description="Glycyl lysine isopeptide (Lys-Gly) (interchain with G-Cter in ubiquitin)" evidence="2">
    <location>
        <position position="363"/>
    </location>
</feature>
<feature type="cross-link" description="Glycyl lysine isopeptide (Lys-Gly) (interchain with G-Cter in ubiquitin)" evidence="2">
    <location>
        <position position="1862"/>
    </location>
</feature>
<feature type="cross-link" description="Glycyl lysine isopeptide (Lys-Gly) (interchain with G-Cter in ubiquitin)" evidence="2">
    <location>
        <position position="1863"/>
    </location>
</feature>
<feature type="cross-link" description="Glycyl lysine isopeptide (Lys-Gly) (interchain with G-Cter in SUMO2)" evidence="2">
    <location>
        <position position="2079"/>
    </location>
</feature>
<feature type="mutagenesis site" description="Causes temperature-sensitive cell cycle arrest in a Go-like state." evidence="7">
    <original>P</original>
    <variation>S</variation>
    <location>
        <position position="134"/>
    </location>
</feature>
<dbReference type="EMBL" id="D45419">
    <property type="protein sequence ID" value="BAA08258.1"/>
    <property type="molecule type" value="mRNA"/>
</dbReference>
<dbReference type="RefSeq" id="NP_001268286.1">
    <property type="nucleotide sequence ID" value="NM_001281357.1"/>
</dbReference>
<dbReference type="BMRB" id="P51611"/>
<dbReference type="SMR" id="P51611"/>
<dbReference type="STRING" id="10036.ENSMAUP00000020485"/>
<dbReference type="GeneID" id="101830931"/>
<dbReference type="KEGG" id="maua:101830931"/>
<dbReference type="CTD" id="3054"/>
<dbReference type="eggNOG" id="KOG4152">
    <property type="taxonomic scope" value="Eukaryota"/>
</dbReference>
<dbReference type="OrthoDB" id="10001928at2759"/>
<dbReference type="Proteomes" id="UP000189706">
    <property type="component" value="Unplaced"/>
</dbReference>
<dbReference type="GO" id="GO:0005737">
    <property type="term" value="C:cytoplasm"/>
    <property type="evidence" value="ECO:0000250"/>
    <property type="project" value="UniProtKB"/>
</dbReference>
<dbReference type="GO" id="GO:0000123">
    <property type="term" value="C:histone acetyltransferase complex"/>
    <property type="evidence" value="ECO:0000250"/>
    <property type="project" value="UniProtKB"/>
</dbReference>
<dbReference type="GO" id="GO:0071339">
    <property type="term" value="C:MLL1 complex"/>
    <property type="evidence" value="ECO:0000250"/>
    <property type="project" value="UniProtKB"/>
</dbReference>
<dbReference type="GO" id="GO:0043025">
    <property type="term" value="C:neuronal cell body"/>
    <property type="evidence" value="ECO:0000250"/>
    <property type="project" value="UniProtKB"/>
</dbReference>
<dbReference type="GO" id="GO:0005634">
    <property type="term" value="C:nucleus"/>
    <property type="evidence" value="ECO:0000250"/>
    <property type="project" value="UniProtKB"/>
</dbReference>
<dbReference type="GO" id="GO:0048188">
    <property type="term" value="C:Set1C/COMPASS complex"/>
    <property type="evidence" value="ECO:0000250"/>
    <property type="project" value="UniProtKB"/>
</dbReference>
<dbReference type="GO" id="GO:0003682">
    <property type="term" value="F:chromatin binding"/>
    <property type="evidence" value="ECO:0000250"/>
    <property type="project" value="UniProtKB"/>
</dbReference>
<dbReference type="GO" id="GO:0003713">
    <property type="term" value="F:transcription coactivator activity"/>
    <property type="evidence" value="ECO:0000315"/>
    <property type="project" value="UniProtKB"/>
</dbReference>
<dbReference type="GO" id="GO:0006338">
    <property type="term" value="P:chromatin remodeling"/>
    <property type="evidence" value="ECO:0007669"/>
    <property type="project" value="TreeGrafter"/>
</dbReference>
<dbReference type="GO" id="GO:0000122">
    <property type="term" value="P:negative regulation of transcription by RNA polymerase II"/>
    <property type="evidence" value="ECO:0000250"/>
    <property type="project" value="UniProtKB"/>
</dbReference>
<dbReference type="GO" id="GO:0045931">
    <property type="term" value="P:positive regulation of mitotic cell cycle"/>
    <property type="evidence" value="ECO:0000315"/>
    <property type="project" value="UniProtKB"/>
</dbReference>
<dbReference type="GO" id="GO:0050821">
    <property type="term" value="P:protein stabilization"/>
    <property type="evidence" value="ECO:0000250"/>
    <property type="project" value="UniProtKB"/>
</dbReference>
<dbReference type="CDD" id="cd00063">
    <property type="entry name" value="FN3"/>
    <property type="match status" value="2"/>
</dbReference>
<dbReference type="FunFam" id="2.60.40.10:FF:000443">
    <property type="entry name" value="host cell factor 1"/>
    <property type="match status" value="1"/>
</dbReference>
<dbReference type="FunFam" id="2.60.40.10:FF:000259">
    <property type="entry name" value="Host cell factor 1 (Predicted)"/>
    <property type="match status" value="1"/>
</dbReference>
<dbReference type="FunFam" id="2.120.10.80:FF:000008">
    <property type="entry name" value="host cell factor 1 isoform X1"/>
    <property type="match status" value="1"/>
</dbReference>
<dbReference type="FunFam" id="2.120.10.80:FF:000015">
    <property type="entry name" value="host cell factor 1 isoform X1"/>
    <property type="match status" value="1"/>
</dbReference>
<dbReference type="Gene3D" id="6.10.250.2590">
    <property type="match status" value="1"/>
</dbReference>
<dbReference type="Gene3D" id="2.60.40.10">
    <property type="entry name" value="Immunoglobulins"/>
    <property type="match status" value="2"/>
</dbReference>
<dbReference type="Gene3D" id="2.120.10.80">
    <property type="entry name" value="Kelch-type beta propeller"/>
    <property type="match status" value="2"/>
</dbReference>
<dbReference type="InterPro" id="IPR003961">
    <property type="entry name" value="FN3_dom"/>
</dbReference>
<dbReference type="InterPro" id="IPR036116">
    <property type="entry name" value="FN3_sf"/>
</dbReference>
<dbReference type="InterPro" id="IPR043536">
    <property type="entry name" value="HCF1/2"/>
</dbReference>
<dbReference type="InterPro" id="IPR013783">
    <property type="entry name" value="Ig-like_fold"/>
</dbReference>
<dbReference type="InterPro" id="IPR015915">
    <property type="entry name" value="Kelch-typ_b-propeller"/>
</dbReference>
<dbReference type="PANTHER" id="PTHR46003">
    <property type="entry name" value="HOST CELL FACTOR"/>
    <property type="match status" value="1"/>
</dbReference>
<dbReference type="PANTHER" id="PTHR46003:SF3">
    <property type="entry name" value="HOST CELL FACTOR 1"/>
    <property type="match status" value="1"/>
</dbReference>
<dbReference type="Pfam" id="PF13854">
    <property type="entry name" value="Kelch_HCF"/>
    <property type="match status" value="1"/>
</dbReference>
<dbReference type="SMART" id="SM00060">
    <property type="entry name" value="FN3"/>
    <property type="match status" value="3"/>
</dbReference>
<dbReference type="SUPFAM" id="SSF49265">
    <property type="entry name" value="Fibronectin type III"/>
    <property type="match status" value="1"/>
</dbReference>
<dbReference type="SUPFAM" id="SSF117281">
    <property type="entry name" value="Kelch motif"/>
    <property type="match status" value="1"/>
</dbReference>
<dbReference type="PROSITE" id="PS50853">
    <property type="entry name" value="FN3"/>
    <property type="match status" value="3"/>
</dbReference>
<reference key="1">
    <citation type="journal article" date="1997" name="Genes Dev.">
        <title>A single-point mutation in HCF causes temperature-sensitive cell-cycle arrest and disrupts VP16 function.</title>
        <authorList>
            <person name="Goto H."/>
            <person name="Motomura S."/>
            <person name="Wilson A.C."/>
            <person name="Freiman R.N."/>
            <person name="Nakabeppu Y."/>
            <person name="Fukushima K."/>
            <person name="Fujishima M."/>
            <person name="Herr W."/>
            <person name="Nishimoto T."/>
        </authorList>
    </citation>
    <scope>NUCLEOTIDE SEQUENCE [MRNA]</scope>
    <scope>FUNCTION</scope>
    <scope>MUTAGENESIS OF PRO-134</scope>
</reference>
<comment type="function">
    <text evidence="1 2 7">Transcriptional coregulator (By similarity). Serves as a scaffold protein, bridging interactions between transcription factors, including THAP11 and ZNF143, and transcriptional coregulators (By similarity). Involved in control of the cell cycle (PubMed:9087427). Also antagonizes transactivation by ZBTB17 and GABP2; represses ZBTB17 activation of the p15(INK4b) promoter and inhibits its ability to recruit p300 (By similarity). Coactivator for EGR2 and GABP2 (By similarity). Tethers the chromatin modifying Set1/Ash2 histone H3 'Lys-4' methyltransferase (H3K4me) and Sin3 histone deacetylase (HDAC) complexes (involved in the activation and repression of transcription respectively) together (By similarity). As part of the NSL complex it may be involved in acetylation of nucleosomal histone H4 on several lysine residues (By similarity). Recruits KMT2E to E2F1 responsive promoters promoting transcriptional activation and thereby facilitates G1 to S phase transition (By similarity). Modulates expression of homeobox protein PDX1, perhaps acting in concert with transcription factor E2F1, thereby regulating pancreatic beta-cell growth and glucose-stimulated insulin secretion (By similarity). May negatively modulate transcriptional activity of FOXO3 (By similarity).</text>
</comment>
<comment type="subunit">
    <text evidence="2 3">Composed predominantly of six polypeptides ranging from 110 to 150 kDa and a minor 300 kDa polypeptide. The majority of N- and C-terminal cleavage products remain tightly, albeit non-covalently, associated. Interacts with POU2F1, CREB3, ZBTB17, EGR2, E2F4, CREBZF, SP1, GABP2, Sin3 HDAC complex (SIN3A, HDAC1, HDAC2, SUDS3), SAP30, SIN3B and FHL2. Component of a MLL1 complex, composed of at least the core components KMT2A/MLL1, ASH2L, HCFC1, WDR5 and RBBP5, as well as the facultative components BACC1, CHD8, DPY30, E2F6, HCFC2, HSP70, INO80C, KANSL1, LAS1L, MAX, MCRS1, MEN1, MGA, KAT8, PELP1, PHF20, PRP31, RING2, RUVBL1, RUVBL2, SENP3, TAF1, TAF4, TAF6, TAF7, TAF9 and TEX10. Component of a THAP1/THAP3-HCFC1-OGT complex that is required for the regulation of the transcriptional activity of RRM1. Interacts directly with THAP3 (via its HBM). Interacts (via the Kelch-repeat domain) with THAP1 (via the HBM); the interaction recruits HCHC1 to the RRM1. Interacts directly with OGT; the interaction, which requires the HCFC1 cleavage site domain, glycosylates and promotes the proteolytic processing of HCFC1 and retains OGT in the nucleus. Component of the SET1 complex, at least composed of the catalytic subunit (SETD1A or SETD1B), WDR5, WDR82, RBBP5, ASH2L, CXXC1, HCFC1 and DPY30. Component of the NSL complex at least composed of MOF/KAT8, KANSL1, KANSL2, KANSL3, MCRS1, PHF20, OGT1/OGT, WDR5 and HCFC1. Component of a complex at least composed of ZNF335, HCFC1, CCAR2, EMSY, MKI67, RBBP5, ASH2L and WDR5; the complex is formed as a result of interactions between components of a nuclear receptor-mediated transcription complex and a histone methylation complex (By similarity). Within the complex interacts with ZNF335 (By similarity). Interacts with TET2 and TET3. Interacts with HCFC1R1. Interacts with THAP11. Interacts (via Kelch domain) with KMT2E (via HBM motif). Interacts with E2F1. Accessory scaffold component of the polycomb repressive deubiquitinase (PR-DUB) complex, at least composed of BAP1, one of ASXL1, ASXL2 or (probably) ASXL3 and one of MBD5 or MBD6; the PR-DUB core associates with a number of accessory proteins, including FOXK1, FOXK2, KDM1B, HCFC1, YY1 and OGT (By similarity). Interacts with YY1 (via Gly-rich region); the interaction is direct (By similarity). Interacts with BAP1 (via HBM-like motif) (By similarity).</text>
</comment>
<comment type="subcellular location">
    <subcellularLocation>
        <location evidence="2">Cytoplasm</location>
    </subcellularLocation>
    <subcellularLocation>
        <location evidence="2">Nucleus</location>
    </subcellularLocation>
    <text evidence="2">HCFC1R1 modulates its subcellular localization and overexpression of HCFC1R1 leads to accumulation of HCFC1 in the cytoplasm. Non-processed HCFC1 associates with chromatin. Colocalizes with CREB3 and CANX in the ER.</text>
</comment>
<comment type="domain">
    <text evidence="2">The HCF repeat is a highly specific proteolytic cleavage signal.</text>
</comment>
<comment type="domain">
    <text evidence="2">The kelch repeats fold into a 6-bladed kelch beta-propeller called the beta-propeller domain which mediates interaction with HCFC1R1.</text>
</comment>
<comment type="PTM">
    <text evidence="2">Proteolytically cleaved at one or several PPCE--THET sites within the HCF repeats. Cleavage is promoted by O-glycosylation (By similarity). Further cleavage of the primary N- and C-terminal chains results in a 'trimming' and accumulation of the smaller chains (By similarity). Cleavage is promoted by O-glycosylation (By similarity).</text>
</comment>
<comment type="PTM">
    <text evidence="2">O-glycosylated. GlcNAcylation by OGT promotes proteolytic processing.</text>
</comment>
<comment type="PTM">
    <text evidence="2">Ubiquitinated. Lys-1862 and Lys-1863 are ubiquitinated both via 'Lys-48'- and 'Lys-63'-linked polyubiquitin chains. BAP1 mediated deubiquitination of 'Lys-48'-linked polyubiquitin chains; deubiquitination by BAP1 does not seem to stabilize the protein.</text>
</comment>
<keyword id="KW-0007">Acetylation</keyword>
<keyword id="KW-0068">Autocatalytic cleavage</keyword>
<keyword id="KW-0131">Cell cycle</keyword>
<keyword id="KW-0156">Chromatin regulator</keyword>
<keyword id="KW-0963">Cytoplasm</keyword>
<keyword id="KW-0325">Glycoprotein</keyword>
<keyword id="KW-1017">Isopeptide bond</keyword>
<keyword id="KW-0880">Kelch repeat</keyword>
<keyword id="KW-0488">Methylation</keyword>
<keyword id="KW-0539">Nucleus</keyword>
<keyword id="KW-0597">Phosphoprotein</keyword>
<keyword id="KW-1185">Reference proteome</keyword>
<keyword id="KW-0677">Repeat</keyword>
<keyword id="KW-0832">Ubl conjugation</keyword>
<protein>
    <recommendedName>
        <fullName evidence="2">Host cell factor 1</fullName>
        <shortName evidence="8">HCF</shortName>
        <shortName evidence="2">HCF-1</shortName>
    </recommendedName>
    <alternativeName>
        <fullName evidence="2">C1 factor</fullName>
    </alternativeName>
    <alternativeName>
        <fullName evidence="2">VCAF</fullName>
    </alternativeName>
    <alternativeName>
        <fullName evidence="2">VP16 accessory protein</fullName>
    </alternativeName>
    <component>
        <recommendedName>
            <fullName evidence="2">HCF N-terminal chain 1</fullName>
        </recommendedName>
    </component>
    <component>
        <recommendedName>
            <fullName evidence="2">HCF N-terminal chain 2</fullName>
        </recommendedName>
    </component>
    <component>
        <recommendedName>
            <fullName evidence="2">HCF N-terminal chain 3</fullName>
        </recommendedName>
    </component>
    <component>
        <recommendedName>
            <fullName evidence="2">HCF N-terminal chain 4</fullName>
        </recommendedName>
    </component>
    <component>
        <recommendedName>
            <fullName evidence="2">HCF N-terminal chain 5</fullName>
        </recommendedName>
    </component>
    <component>
        <recommendedName>
            <fullName evidence="2">HCF N-terminal chain 6</fullName>
        </recommendedName>
    </component>
    <component>
        <recommendedName>
            <fullName evidence="2">HCF C-terminal chain 1</fullName>
        </recommendedName>
    </component>
    <component>
        <recommendedName>
            <fullName evidence="2">HCF C-terminal chain 2</fullName>
        </recommendedName>
    </component>
    <component>
        <recommendedName>
            <fullName evidence="2">HCF C-terminal chain 3</fullName>
        </recommendedName>
    </component>
    <component>
        <recommendedName>
            <fullName evidence="2">HCF C-terminal chain 4</fullName>
        </recommendedName>
    </component>
    <component>
        <recommendedName>
            <fullName evidence="2">HCF C-terminal chain 5</fullName>
        </recommendedName>
    </component>
    <component>
        <recommendedName>
            <fullName evidence="2">HCF C-terminal chain 6</fullName>
        </recommendedName>
    </component>
</protein>
<accession>P51611</accession>
<organism>
    <name type="scientific">Mesocricetus auratus</name>
    <name type="common">Golden hamster</name>
    <dbReference type="NCBI Taxonomy" id="10036"/>
    <lineage>
        <taxon>Eukaryota</taxon>
        <taxon>Metazoa</taxon>
        <taxon>Chordata</taxon>
        <taxon>Craniata</taxon>
        <taxon>Vertebrata</taxon>
        <taxon>Euteleostomi</taxon>
        <taxon>Mammalia</taxon>
        <taxon>Eutheria</taxon>
        <taxon>Euarchontoglires</taxon>
        <taxon>Glires</taxon>
        <taxon>Rodentia</taxon>
        <taxon>Myomorpha</taxon>
        <taxon>Muroidea</taxon>
        <taxon>Cricetidae</taxon>
        <taxon>Cricetinae</taxon>
        <taxon>Mesocricetus</taxon>
    </lineage>
</organism>
<gene>
    <name evidence="2" type="primary">HCFC1</name>
</gene>
<sequence>MASAVSPANLPAVLLQPRWKRVVGWSGPVPRPRHGHRAVAIKELIVVFGGGNEGIVDELHVYNTATNQWFIPAVRGDIPPGCAAYGFVCDGTRLLVFGGMVEYGKYSNDLYELQASRWEWKRLKAKTPKNGPPPCPRLGHSFSLVGNKCYLFGGLANDSEDPKNNIPRYLNDLYILELRPGSGVVAWDIPITYGVLPPPRESHTAVVYTEKDNKKSKLVIYGGMSGCRLGDLWTLDIETLTWNKPSLSGVAPLPRSLHSATTIGNKMYVFGGWVPLVMDDVKVATHEKEWKCTNTLACLNLDTMAWETILMDTLEDNIPRARAGHCAVAINTRLYIWSGRDGYRKAWNNQVCCKDLWYLETEKPPPPARVQLVRANTNSLEVSWGAVATADSYLLQLQKYDIPATAATATSPTPNPVPSVPANPPKSPAPAAAAPAVQPLTQVGITLVPQAAAAPPSTTTIQVLPTVPGSSISVPTAARAQGVPAVLKVTGPQATTGTPLVTMRPAGQAGKAPVTVTSLPASVRMVVPTQSAQGTVIGSNPQMSGMAALAAAAAATQKIPPSSAPTVLSVPAGTTIVKTVAVTPGTTTLPATVKVASSPVMVSNPATRMLKTAAAQVGTSVSSAANTSTRPIITVHKSGTVTVAQQAQVVTTVVGGVTKTITLVKSPISVPGGSALISNLGKVMSVVQTKPVQTSAVTGQASTGPVTQIIQTKGPLPAGTILKLVTSADGKPTTIITTTQASGAGSKPTILGISSVSPSTTKPGTTTIIKTIPMSAIITQAGATGVTSTPGIKSPITIITTKVMTSGTGAPAKIITAVPKIATGHGQQGVTQVVLKGAPGQPGAILRTVPMSGVRLVTPVTVSAVKPAVTTLVVKGTTGVTTLGTVTGTVSTSLAGAGAHSTSASLATPITTLGTIATLSSQVINPTAITVSAAQTTLTAAGGLTTPTITMQPVSQPTQVTLITAPSGVEAQPVHDLPVSILASPTTEQPTATVTIADSGQGDVQPGTVTLVCSNPPCETHETGTTNTATTTVVANLGGHPQPTQVQFVCDRQEAAASLVTSAVGQQNGNVVRVCSNPPCETHETGTTNTATTATSNMAGQHGCSNPPCETHETGTTSTATTAMSSMGTGQQRDTRHTSSNPTVVRITVAPGALERTQGTVKPQCQTQQANMTNTTMTVQATRSPCPAGPLLRPSVALEAGNHSPAFVQLALPSVRVGLSGPSNKDMPTGHQLETYHTYTTNTPTTALSIMGAGELGTARLIPTSTYESLQASSPSSTMTMTALEALLCPSATVTQVCSNPPCETHETGTTNTATTSNAGSAQRVCSNPPCETHETGTTHTATTATSNGGAGQPEGGQQPAGGRPCETHQTTSTGTTMSVSVGALLPDATPSHGTLESGLEVVAVSTVTSQAGATLLASFPTQRVCSNPPCETHETGTTHTATTVTSNMSSNQDPPPAASDQGEVVSTQGDSANITSSSGITTTVSSTLPRAVTTVTQSTPVPGPSVPNISSLTETPGALTSEVPIPATITVTIANTETSDMPFSAVDILQPPEELQVSPGPRQQLPPRQLLQSASTPLMGESSEVLSASQTPELQAAVDLSSTGDPSSGQEPTSSAVVATVVVQPPPPTQSEVDQLSLPQELMAEAQAGTTTLMVTGLTPEELAVTAAAEAAAQAAATEEAQALAIQAVLQAAQQAVMAGTGEPMDTSEAAAAVTQAELGHLSAEGQEGQATTIPIVLTQQELAALVQQQQQLQEVQAQAQQQHHLPTEALAPADSLNDPSIESNCLNELASAVPSTVALLPSTATESLAPSNTFVAPQPVVVASPAKMQAAATLTEVDNGIESLGVKPDLPPPPSKAPVKKENQWFDVGVIKGTSVMVTHYFLPPDDAVQSDDDSGTIPDYNQLKKQELQPGTAYKFRVAGINACGRGPFSEISAFKTCLPGFPGAPCAIKISKSPDGAHLTWEPPSVTSGKIIEYSVYLAIQSSQAGGEPKSSTPAQLAFMRVYCGPSPSCLVQSSSLSNAHIDYTTKPAIIFRIAARNEKGYGPATQVRWLQETSKDSSGTKPASKRPMSSPEMKSAPKKSKADGQ</sequence>